<proteinExistence type="evidence at protein level"/>
<organism>
    <name type="scientific">Equine arteritis virus (strain Bucyrus)</name>
    <name type="common">EAV</name>
    <dbReference type="NCBI Taxonomy" id="299386"/>
    <lineage>
        <taxon>Viruses</taxon>
        <taxon>Riboviria</taxon>
        <taxon>Orthornavirae</taxon>
        <taxon>Pisuviricota</taxon>
        <taxon>Pisoniviricetes</taxon>
        <taxon>Nidovirales</taxon>
        <taxon>Arnidovirineae</taxon>
        <taxon>Arteriviridae</taxon>
        <taxon>Equarterivirinae</taxon>
        <taxon>Alphaarterivirus</taxon>
        <taxon>Alphaarterivirus equid</taxon>
    </lineage>
</organism>
<feature type="signal peptide" evidence="2">
    <location>
        <begin position="1"/>
        <end position="18"/>
    </location>
</feature>
<feature type="chain" id="PRO_0000080882" description="Glycoprotein 5">
    <location>
        <begin position="19"/>
        <end position="255"/>
    </location>
</feature>
<feature type="topological domain" description="Virion surface" evidence="2">
    <location>
        <begin position="19"/>
        <end position="117"/>
    </location>
</feature>
<feature type="transmembrane region" description="Helical" evidence="2">
    <location>
        <begin position="118"/>
        <end position="138"/>
    </location>
</feature>
<feature type="transmembrane region" description="Helical" evidence="2">
    <location>
        <begin position="151"/>
        <end position="171"/>
    </location>
</feature>
<feature type="glycosylation site" description="N-linked (GlcNAc...) asparagine; by host" evidence="2">
    <location>
        <position position="56"/>
    </location>
</feature>
<feature type="disulfide bond" description="Interchain (with C-8 in membrane protein)" evidence="3">
    <location>
        <position position="34"/>
    </location>
</feature>
<feature type="mutagenesis site" description="Complete loss of infectivity." evidence="3">
    <original>C</original>
    <variation>S</variation>
    <location>
        <position position="34"/>
    </location>
</feature>
<feature type="mutagenesis site" description="Complete loss of infectivity." evidence="3">
    <original>N</original>
    <variation>G</variation>
    <location>
        <position position="56"/>
    </location>
</feature>
<feature type="mutagenesis site" description="Complete loss of infectivity." evidence="3">
    <original>N</original>
    <variation>Q</variation>
    <location>
        <position position="56"/>
    </location>
</feature>
<feature type="mutagenesis site" description="Complete loss of infectivity." evidence="3">
    <original>N</original>
    <variation>S</variation>
    <location>
        <position position="56"/>
    </location>
</feature>
<feature type="mutagenesis site" description="Complete loss of infectivity." evidence="3">
    <original>C</original>
    <variation>S</variation>
    <location>
        <position position="57"/>
    </location>
</feature>
<feature type="mutagenesis site" description="Complete loss of infectivity." evidence="3">
    <original>S</original>
    <variation>G</variation>
    <location>
        <position position="58"/>
    </location>
</feature>
<feature type="mutagenesis site" description="Complete loss of infectivity." evidence="3">
    <original>C</original>
    <variation>S</variation>
    <location>
        <position position="63"/>
    </location>
</feature>
<feature type="mutagenesis site" description="Complete loss of infectivity." evidence="3">
    <original>C</original>
    <variation>S</variation>
    <location>
        <position position="66"/>
    </location>
</feature>
<feature type="mutagenesis site" description="Complete loss of infectivity." evidence="3">
    <original>C</original>
    <variation>S</variation>
    <location>
        <position position="80"/>
    </location>
</feature>
<sequence>MLSMIVLLFLLWGAPSHAYFSYYTAQRFTDFTLCMLTDRGVIANLLRYDEHTALYNCSASKTCWYCTFLDEQIITFGTDCDDTYAVPVAEVLEQAHGPYSALFDDMPPFIYYGREFGIVVLDVFMFYPVLVLFFLSVLPYATLILEMCVSILFIIYGIYSGAYLAMGIFAATLAIHSIVVLRQLLWLCLAWRYRCTLHASFISAEGKVYPVDPGLPVAAVGNRLLVPGRPTIDYAVAYGSKVNLVRLGAAEVWEP</sequence>
<dbReference type="EMBL" id="X53459">
    <property type="protein sequence ID" value="CAA37544.1"/>
    <property type="molecule type" value="Genomic_RNA"/>
</dbReference>
<dbReference type="PIR" id="F39925">
    <property type="entry name" value="F39925"/>
</dbReference>
<dbReference type="RefSeq" id="NP_065659.1">
    <property type="nucleotide sequence ID" value="NC_002532.2"/>
</dbReference>
<dbReference type="GlyCosmos" id="P28995">
    <property type="glycosylation" value="1 site, No reported glycans"/>
</dbReference>
<dbReference type="GeneID" id="921342"/>
<dbReference type="KEGG" id="vg:921342"/>
<dbReference type="Proteomes" id="UP000000353">
    <property type="component" value="Segment"/>
</dbReference>
<dbReference type="GO" id="GO:0016020">
    <property type="term" value="C:membrane"/>
    <property type="evidence" value="ECO:0007669"/>
    <property type="project" value="UniProtKB-KW"/>
</dbReference>
<dbReference type="GO" id="GO:0019031">
    <property type="term" value="C:viral envelope"/>
    <property type="evidence" value="ECO:0007669"/>
    <property type="project" value="UniProtKB-KW"/>
</dbReference>
<dbReference type="GO" id="GO:0055036">
    <property type="term" value="C:virion membrane"/>
    <property type="evidence" value="ECO:0007669"/>
    <property type="project" value="UniProtKB-SubCell"/>
</dbReference>
<dbReference type="InterPro" id="IPR001332">
    <property type="entry name" value="Arteri_GP5"/>
</dbReference>
<dbReference type="InterPro" id="IPR020403">
    <property type="entry name" value="EAV_Gp5"/>
</dbReference>
<dbReference type="Pfam" id="PF00951">
    <property type="entry name" value="Arteri_Gl"/>
    <property type="match status" value="1"/>
</dbReference>
<dbReference type="Pfam" id="PF15981">
    <property type="entry name" value="EAV_GP5"/>
    <property type="match status" value="1"/>
</dbReference>
<keyword id="KW-0024">Alternative initiation</keyword>
<keyword id="KW-1015">Disulfide bond</keyword>
<keyword id="KW-0325">Glycoprotein</keyword>
<keyword id="KW-0472">Membrane</keyword>
<keyword id="KW-1185">Reference proteome</keyword>
<keyword id="KW-0732">Signal</keyword>
<keyword id="KW-0812">Transmembrane</keyword>
<keyword id="KW-1133">Transmembrane helix</keyword>
<keyword id="KW-0261">Viral envelope protein</keyword>
<keyword id="KW-0946">Virion</keyword>
<accession>P28995</accession>
<evidence type="ECO:0000250" key="1"/>
<evidence type="ECO:0000255" key="2"/>
<evidence type="ECO:0000269" key="3">
    <source>
    </source>
</evidence>
<evidence type="ECO:0000305" key="4"/>
<reference key="1">
    <citation type="journal article" date="1991" name="J. Virol.">
        <title>Equine arteritis virus is not a togavirus but belongs to the coronaviruslike superfamily.</title>
        <authorList>
            <person name="den Boon J.A."/>
            <person name="Snijder E.J."/>
            <person name="Chirnside E.D."/>
            <person name="de Vries A.A.F."/>
            <person name="Horzinek M.C."/>
            <person name="Spaan W.J.M."/>
        </authorList>
    </citation>
    <scope>NUCLEOTIDE SEQUENCE [GENOMIC RNA]</scope>
</reference>
<reference key="2">
    <citation type="journal article" date="2003" name="J. Virol.">
        <title>Heterodimerization of the two major envelope proteins is essential for arterivirus infectivity.</title>
        <authorList>
            <person name="Snijder E.J."/>
            <person name="Dobbe J.C."/>
            <person name="Spaan W.J."/>
        </authorList>
    </citation>
    <scope>SUBUNIT</scope>
    <scope>DISULFIDE BONDS</scope>
    <scope>MUTAGENESIS OF CYS-34; ASN-56; CYS-57; SER-58; CYS-63; CYS-66 AND CYS-80</scope>
</reference>
<protein>
    <recommendedName>
        <fullName>Glycoprotein 5</fullName>
        <shortName>Protein GP5</shortName>
    </recommendedName>
    <alternativeName>
        <fullName>G(L)</fullName>
    </alternativeName>
</protein>
<organismHost>
    <name type="scientific">Equidae</name>
    <name type="common">horses</name>
    <dbReference type="NCBI Taxonomy" id="9788"/>
</organismHost>
<gene>
    <name type="primary">GP5</name>
    <name type="ORF">5</name>
</gene>
<name>GP5_EAVBU</name>
<comment type="function">
    <text evidence="1">Major envelope protein present in abundant amounts in the virion envelope.</text>
</comment>
<comment type="subunit">
    <text evidence="1">Heterodimer with the membrane protein; disulfide-linked. This heterodimerization is required for transport to the Golgi complex. Interacts with glycoprotein 4 (By similarity).</text>
</comment>
<comment type="subcellular location">
    <subcellularLocation>
        <location evidence="4">Virion membrane</location>
        <topology evidence="4">Multi-pass membrane protein</topology>
    </subcellularLocation>
</comment>
<comment type="alternative products">
    <event type="alternative initiation"/>
    <isoform>
        <id>P28995-1</id>
        <name>GP5</name>
        <name>Glycoprotein 5</name>
        <sequence type="displayed"/>
    </isoform>
    <isoform>
        <id>P0DJX9-1</id>
        <name>ORF5a</name>
        <name>Protein ORF5a</name>
        <sequence type="external"/>
    </isoform>
</comment>
<comment type="similarity">
    <text evidence="4">Belongs to the arteriviridae GP5 protein family.</text>
</comment>